<comment type="subcellular location">
    <subcellularLocation>
        <location evidence="7">Nucleus</location>
    </subcellularLocation>
</comment>
<comment type="alternative products">
    <event type="alternative splicing"/>
    <isoform>
        <id>Q9C0H5-1</id>
        <name>1</name>
        <sequence type="displayed"/>
    </isoform>
    <isoform>
        <id>Q9C0H5-2</id>
        <name>2</name>
        <sequence type="described" ref="VSP_040749"/>
    </isoform>
</comment>
<comment type="sequence caution" evidence="7">
    <conflict type="erroneous initiation">
        <sequence resource="EMBL-CDS" id="BAB21779"/>
    </conflict>
    <text>Extended N-terminus.</text>
</comment>
<comment type="sequence caution" evidence="7">
    <conflict type="erroneous initiation">
        <sequence resource="EMBL-CDS" id="BAG64793"/>
    </conflict>
    <text>Truncated N-terminus.</text>
</comment>
<organism>
    <name type="scientific">Homo sapiens</name>
    <name type="common">Human</name>
    <dbReference type="NCBI Taxonomy" id="9606"/>
    <lineage>
        <taxon>Eukaryota</taxon>
        <taxon>Metazoa</taxon>
        <taxon>Chordata</taxon>
        <taxon>Craniata</taxon>
        <taxon>Vertebrata</taxon>
        <taxon>Euteleostomi</taxon>
        <taxon>Mammalia</taxon>
        <taxon>Eutheria</taxon>
        <taxon>Euarchontoglires</taxon>
        <taxon>Primates</taxon>
        <taxon>Haplorrhini</taxon>
        <taxon>Catarrhini</taxon>
        <taxon>Hominidae</taxon>
        <taxon>Homo</taxon>
    </lineage>
</organism>
<gene>
    <name type="primary">ARHGAP39</name>
    <name type="synonym">KIAA1688</name>
</gene>
<evidence type="ECO:0000250" key="1">
    <source>
        <dbReference type="UniProtKB" id="P59281"/>
    </source>
</evidence>
<evidence type="ECO:0000255" key="2">
    <source>
        <dbReference type="PROSITE-ProRule" id="PRU00172"/>
    </source>
</evidence>
<evidence type="ECO:0000255" key="3">
    <source>
        <dbReference type="PROSITE-ProRule" id="PRU00224"/>
    </source>
</evidence>
<evidence type="ECO:0000255" key="4">
    <source>
        <dbReference type="PROSITE-ProRule" id="PRU00359"/>
    </source>
</evidence>
<evidence type="ECO:0000256" key="5">
    <source>
        <dbReference type="SAM" id="MobiDB-lite"/>
    </source>
</evidence>
<evidence type="ECO:0000303" key="6">
    <source>
    </source>
</evidence>
<evidence type="ECO:0000305" key="7"/>
<evidence type="ECO:0007744" key="8">
    <source>
    </source>
</evidence>
<evidence type="ECO:0007744" key="9">
    <source>
    </source>
</evidence>
<evidence type="ECO:0007744" key="10">
    <source>
    </source>
</evidence>
<evidence type="ECO:0007744" key="11">
    <source>
    </source>
</evidence>
<evidence type="ECO:0007744" key="12">
    <source>
    </source>
</evidence>
<evidence type="ECO:0007744" key="13">
    <source>
    </source>
</evidence>
<feature type="initiator methionine" description="Removed" evidence="12">
    <location>
        <position position="1"/>
    </location>
</feature>
<feature type="chain" id="PRO_0000076092" description="Rho GTPase-activating protein 39">
    <location>
        <begin position="2"/>
        <end position="1083"/>
    </location>
</feature>
<feature type="domain" description="WW 1" evidence="3">
    <location>
        <begin position="25"/>
        <end position="58"/>
    </location>
</feature>
<feature type="domain" description="WW 2" evidence="3">
    <location>
        <begin position="63"/>
        <end position="97"/>
    </location>
</feature>
<feature type="domain" description="MyTH4" evidence="4">
    <location>
        <begin position="722"/>
        <end position="879"/>
    </location>
</feature>
<feature type="domain" description="Rho-GAP" evidence="2">
    <location>
        <begin position="890"/>
        <end position="1078"/>
    </location>
</feature>
<feature type="region of interest" description="Disordered" evidence="5">
    <location>
        <begin position="110"/>
        <end position="154"/>
    </location>
</feature>
<feature type="region of interest" description="Disordered" evidence="5">
    <location>
        <begin position="226"/>
        <end position="369"/>
    </location>
</feature>
<feature type="region of interest" description="Disordered" evidence="5">
    <location>
        <begin position="405"/>
        <end position="545"/>
    </location>
</feature>
<feature type="region of interest" description="Disordered" evidence="5">
    <location>
        <begin position="570"/>
        <end position="599"/>
    </location>
</feature>
<feature type="compositionally biased region" description="Low complexity" evidence="5">
    <location>
        <begin position="117"/>
        <end position="141"/>
    </location>
</feature>
<feature type="compositionally biased region" description="Polar residues" evidence="5">
    <location>
        <begin position="245"/>
        <end position="256"/>
    </location>
</feature>
<feature type="compositionally biased region" description="Basic and acidic residues" evidence="5">
    <location>
        <begin position="268"/>
        <end position="280"/>
    </location>
</feature>
<feature type="compositionally biased region" description="Polar residues" evidence="5">
    <location>
        <begin position="474"/>
        <end position="488"/>
    </location>
</feature>
<feature type="compositionally biased region" description="Polar residues" evidence="5">
    <location>
        <begin position="573"/>
        <end position="582"/>
    </location>
</feature>
<feature type="site" description="Arginine finger; crucial for GTP hydrolysis by stabilizing the transition state" evidence="2">
    <location>
        <position position="932"/>
    </location>
</feature>
<feature type="modified residue" description="N-acetylserine" evidence="12">
    <location>
        <position position="2"/>
    </location>
</feature>
<feature type="modified residue" description="Phosphoserine" evidence="13">
    <location>
        <position position="169"/>
    </location>
</feature>
<feature type="modified residue" description="Phosphoserine" evidence="13">
    <location>
        <position position="286"/>
    </location>
</feature>
<feature type="modified residue" description="Phosphoserine" evidence="1">
    <location>
        <position position="384"/>
    </location>
</feature>
<feature type="modified residue" description="Phosphoserine" evidence="11">
    <location>
        <position position="388"/>
    </location>
</feature>
<feature type="modified residue" description="Phosphoserine" evidence="8">
    <location>
        <position position="406"/>
    </location>
</feature>
<feature type="modified residue" description="Phosphoserine" evidence="8 13">
    <location>
        <position position="407"/>
    </location>
</feature>
<feature type="modified residue" description="Phosphoserine" evidence="9 10 11 13">
    <location>
        <position position="604"/>
    </location>
</feature>
<feature type="modified residue" description="Phosphoserine" evidence="13">
    <location>
        <position position="690"/>
    </location>
</feature>
<feature type="modified residue" description="Phosphoserine" evidence="1">
    <location>
        <position position="715"/>
    </location>
</feature>
<feature type="modified residue" description="Phosphoserine" evidence="1">
    <location>
        <position position="726"/>
    </location>
</feature>
<feature type="splice variant" id="VSP_040749" description="In isoform 2." evidence="6">
    <original>K</original>
    <variation>KVTQHIKELLERNTKKKSKLRKKPKPYVEEPD</variation>
    <location>
        <position position="840"/>
    </location>
</feature>
<protein>
    <recommendedName>
        <fullName>Rho GTPase-activating protein 39</fullName>
    </recommendedName>
</protein>
<dbReference type="EMBL" id="AB051475">
    <property type="protein sequence ID" value="BAB21779.1"/>
    <property type="status" value="ALT_INIT"/>
    <property type="molecule type" value="mRNA"/>
</dbReference>
<dbReference type="EMBL" id="AC084125">
    <property type="status" value="NOT_ANNOTATED_CDS"/>
    <property type="molecule type" value="Genomic_DNA"/>
</dbReference>
<dbReference type="EMBL" id="AK303851">
    <property type="protein sequence ID" value="BAG64793.1"/>
    <property type="status" value="ALT_INIT"/>
    <property type="molecule type" value="mRNA"/>
</dbReference>
<dbReference type="CCDS" id="CCDS34971.1">
    <molecule id="Q9C0H5-2"/>
</dbReference>
<dbReference type="CCDS" id="CCDS78374.1">
    <molecule id="Q9C0H5-1"/>
</dbReference>
<dbReference type="PIR" id="C59434">
    <property type="entry name" value="C59434"/>
</dbReference>
<dbReference type="RefSeq" id="NP_001295136.1">
    <molecule id="Q9C0H5-1"/>
    <property type="nucleotide sequence ID" value="NM_001308207.1"/>
</dbReference>
<dbReference type="RefSeq" id="NP_001295137.1">
    <molecule id="Q9C0H5-1"/>
    <property type="nucleotide sequence ID" value="NM_001308208.2"/>
</dbReference>
<dbReference type="RefSeq" id="NP_079527.1">
    <molecule id="Q9C0H5-2"/>
    <property type="nucleotide sequence ID" value="NM_025251.3"/>
</dbReference>
<dbReference type="RefSeq" id="XP_011515610.1">
    <molecule id="Q9C0H5-2"/>
    <property type="nucleotide sequence ID" value="XM_011517308.2"/>
</dbReference>
<dbReference type="RefSeq" id="XP_011515611.1">
    <property type="nucleotide sequence ID" value="XM_011517309.1"/>
</dbReference>
<dbReference type="RefSeq" id="XP_016869359.1">
    <molecule id="Q9C0H5-2"/>
    <property type="nucleotide sequence ID" value="XM_017013870.3"/>
</dbReference>
<dbReference type="RefSeq" id="XP_016869360.1">
    <property type="nucleotide sequence ID" value="XM_017013871.1"/>
</dbReference>
<dbReference type="RefSeq" id="XP_054217266.1">
    <molecule id="Q9C0H5-2"/>
    <property type="nucleotide sequence ID" value="XM_054361291.1"/>
</dbReference>
<dbReference type="RefSeq" id="XP_054217267.1">
    <molecule id="Q9C0H5-2"/>
    <property type="nucleotide sequence ID" value="XM_054361292.1"/>
</dbReference>
<dbReference type="SMR" id="Q9C0H5"/>
<dbReference type="BioGRID" id="123278">
    <property type="interactions" value="121"/>
</dbReference>
<dbReference type="FunCoup" id="Q9C0H5">
    <property type="interactions" value="632"/>
</dbReference>
<dbReference type="IntAct" id="Q9C0H5">
    <property type="interactions" value="40"/>
</dbReference>
<dbReference type="MINT" id="Q9C0H5"/>
<dbReference type="STRING" id="9606.ENSP00000366522"/>
<dbReference type="iPTMnet" id="Q9C0H5"/>
<dbReference type="PhosphoSitePlus" id="Q9C0H5"/>
<dbReference type="BioMuta" id="ARHGAP39"/>
<dbReference type="DMDM" id="28380079"/>
<dbReference type="jPOST" id="Q9C0H5"/>
<dbReference type="MassIVE" id="Q9C0H5"/>
<dbReference type="PaxDb" id="9606-ENSP00000366522"/>
<dbReference type="PeptideAtlas" id="Q9C0H5"/>
<dbReference type="ProteomicsDB" id="80042">
    <molecule id="Q9C0H5-1"/>
</dbReference>
<dbReference type="ProteomicsDB" id="80043">
    <molecule id="Q9C0H5-2"/>
</dbReference>
<dbReference type="Pumba" id="Q9C0H5"/>
<dbReference type="Antibodypedia" id="49512">
    <property type="antibodies" value="73 antibodies from 21 providers"/>
</dbReference>
<dbReference type="DNASU" id="80728"/>
<dbReference type="Ensembl" id="ENST00000276826.5">
    <molecule id="Q9C0H5-1"/>
    <property type="protein sequence ID" value="ENSP00000276826.5"/>
    <property type="gene ID" value="ENSG00000147799.12"/>
</dbReference>
<dbReference type="Ensembl" id="ENST00000377307.7">
    <molecule id="Q9C0H5-2"/>
    <property type="protein sequence ID" value="ENSP00000366522.2"/>
    <property type="gene ID" value="ENSG00000147799.12"/>
</dbReference>
<dbReference type="GeneID" id="80728"/>
<dbReference type="KEGG" id="hsa:80728"/>
<dbReference type="MANE-Select" id="ENST00000377307.7">
    <molecule id="Q9C0H5-2"/>
    <property type="protein sequence ID" value="ENSP00000366522.2"/>
    <property type="RefSeq nucleotide sequence ID" value="NM_025251.3"/>
    <property type="RefSeq protein sequence ID" value="NP_079527.1"/>
</dbReference>
<dbReference type="UCSC" id="uc064rpe.1">
    <molecule id="Q9C0H5-1"/>
    <property type="organism name" value="human"/>
</dbReference>
<dbReference type="AGR" id="HGNC:29351"/>
<dbReference type="CTD" id="80728"/>
<dbReference type="DisGeNET" id="80728"/>
<dbReference type="GeneCards" id="ARHGAP39"/>
<dbReference type="HGNC" id="HGNC:29351">
    <property type="gene designation" value="ARHGAP39"/>
</dbReference>
<dbReference type="HPA" id="ENSG00000147799">
    <property type="expression patterns" value="Tissue enhanced (brain, testis)"/>
</dbReference>
<dbReference type="MIM" id="615880">
    <property type="type" value="gene"/>
</dbReference>
<dbReference type="neXtProt" id="NX_Q9C0H5"/>
<dbReference type="OpenTargets" id="ENSG00000147799"/>
<dbReference type="PharmGKB" id="PA165585391"/>
<dbReference type="VEuPathDB" id="HostDB:ENSG00000147799"/>
<dbReference type="eggNOG" id="ENOG502QR6X">
    <property type="taxonomic scope" value="Eukaryota"/>
</dbReference>
<dbReference type="GeneTree" id="ENSGT00390000003161"/>
<dbReference type="HOGENOM" id="CLU_005171_0_0_1"/>
<dbReference type="InParanoid" id="Q9C0H5"/>
<dbReference type="OMA" id="HEFYDEC"/>
<dbReference type="OrthoDB" id="437889at2759"/>
<dbReference type="PAN-GO" id="Q9C0H5">
    <property type="GO annotations" value="2 GO annotations based on evolutionary models"/>
</dbReference>
<dbReference type="PhylomeDB" id="Q9C0H5"/>
<dbReference type="TreeFam" id="TF323577"/>
<dbReference type="PathwayCommons" id="Q9C0H5"/>
<dbReference type="Reactome" id="R-HSA-428543">
    <property type="pathway name" value="Inactivation of CDC42 and RAC1"/>
</dbReference>
<dbReference type="Reactome" id="R-HSA-8980692">
    <property type="pathway name" value="RHOA GTPase cycle"/>
</dbReference>
<dbReference type="Reactome" id="R-HSA-9013026">
    <property type="pathway name" value="RHOB GTPase cycle"/>
</dbReference>
<dbReference type="Reactome" id="R-HSA-9013106">
    <property type="pathway name" value="RHOC GTPase cycle"/>
</dbReference>
<dbReference type="Reactome" id="R-HSA-9013148">
    <property type="pathway name" value="CDC42 GTPase cycle"/>
</dbReference>
<dbReference type="Reactome" id="R-HSA-9013149">
    <property type="pathway name" value="RAC1 GTPase cycle"/>
</dbReference>
<dbReference type="Reactome" id="R-HSA-9013404">
    <property type="pathway name" value="RAC2 GTPase cycle"/>
</dbReference>
<dbReference type="Reactome" id="R-HSA-9013405">
    <property type="pathway name" value="RHOD GTPase cycle"/>
</dbReference>
<dbReference type="Reactome" id="R-HSA-9013408">
    <property type="pathway name" value="RHOG GTPase cycle"/>
</dbReference>
<dbReference type="Reactome" id="R-HSA-9013423">
    <property type="pathway name" value="RAC3 GTPase cycle"/>
</dbReference>
<dbReference type="Reactome" id="R-HSA-9035034">
    <property type="pathway name" value="RHOF GTPase cycle"/>
</dbReference>
<dbReference type="SignaLink" id="Q9C0H5"/>
<dbReference type="SIGNOR" id="Q9C0H5"/>
<dbReference type="BioGRID-ORCS" id="80728">
    <property type="hits" value="11 hits in 1068 CRISPR screens"/>
</dbReference>
<dbReference type="CD-CODE" id="FB4E32DD">
    <property type="entry name" value="Presynaptic clusters and postsynaptic densities"/>
</dbReference>
<dbReference type="ChiTaRS" id="ARHGAP39">
    <property type="organism name" value="human"/>
</dbReference>
<dbReference type="GenomeRNAi" id="80728"/>
<dbReference type="Pharos" id="Q9C0H5">
    <property type="development level" value="Tbio"/>
</dbReference>
<dbReference type="PRO" id="PR:Q9C0H5"/>
<dbReference type="Proteomes" id="UP000005640">
    <property type="component" value="Chromosome 8"/>
</dbReference>
<dbReference type="RNAct" id="Q9C0H5">
    <property type="molecule type" value="protein"/>
</dbReference>
<dbReference type="Bgee" id="ENSG00000147799">
    <property type="expression patterns" value="Expressed in sural nerve and 129 other cell types or tissues"/>
</dbReference>
<dbReference type="GO" id="GO:0005737">
    <property type="term" value="C:cytoplasm"/>
    <property type="evidence" value="ECO:0000318"/>
    <property type="project" value="GO_Central"/>
</dbReference>
<dbReference type="GO" id="GO:0005856">
    <property type="term" value="C:cytoskeleton"/>
    <property type="evidence" value="ECO:0007669"/>
    <property type="project" value="InterPro"/>
</dbReference>
<dbReference type="GO" id="GO:0005829">
    <property type="term" value="C:cytosol"/>
    <property type="evidence" value="ECO:0000304"/>
    <property type="project" value="Reactome"/>
</dbReference>
<dbReference type="GO" id="GO:0098978">
    <property type="term" value="C:glutamatergic synapse"/>
    <property type="evidence" value="ECO:0000314"/>
    <property type="project" value="SynGO"/>
</dbReference>
<dbReference type="GO" id="GO:0005634">
    <property type="term" value="C:nucleus"/>
    <property type="evidence" value="ECO:0007669"/>
    <property type="project" value="UniProtKB-SubCell"/>
</dbReference>
<dbReference type="GO" id="GO:0005096">
    <property type="term" value="F:GTPase activator activity"/>
    <property type="evidence" value="ECO:0000318"/>
    <property type="project" value="GO_Central"/>
</dbReference>
<dbReference type="GO" id="GO:0099173">
    <property type="term" value="P:postsynapse organization"/>
    <property type="evidence" value="ECO:0000314"/>
    <property type="project" value="SynGO"/>
</dbReference>
<dbReference type="GO" id="GO:0051056">
    <property type="term" value="P:regulation of small GTPase mediated signal transduction"/>
    <property type="evidence" value="ECO:0000304"/>
    <property type="project" value="Reactome"/>
</dbReference>
<dbReference type="GO" id="GO:0007165">
    <property type="term" value="P:signal transduction"/>
    <property type="evidence" value="ECO:0007669"/>
    <property type="project" value="InterPro"/>
</dbReference>
<dbReference type="CDD" id="cd04389">
    <property type="entry name" value="RhoGAP_KIAA1688"/>
    <property type="match status" value="1"/>
</dbReference>
<dbReference type="FunFam" id="2.20.70.10:FF:000022">
    <property type="entry name" value="Rho GTPase activating protein 39"/>
    <property type="match status" value="1"/>
</dbReference>
<dbReference type="FunFam" id="1.10.555.10:FF:000011">
    <property type="entry name" value="Rho GTPase-activating protein 39"/>
    <property type="match status" value="1"/>
</dbReference>
<dbReference type="FunFam" id="1.25.40.530:FF:000003">
    <property type="entry name" value="Rho GTPase-activating protein 39"/>
    <property type="match status" value="1"/>
</dbReference>
<dbReference type="Gene3D" id="2.20.70.10">
    <property type="match status" value="1"/>
</dbReference>
<dbReference type="Gene3D" id="1.25.40.530">
    <property type="entry name" value="MyTH4 domain"/>
    <property type="match status" value="1"/>
</dbReference>
<dbReference type="Gene3D" id="1.10.555.10">
    <property type="entry name" value="Rho GTPase activation protein"/>
    <property type="match status" value="1"/>
</dbReference>
<dbReference type="InterPro" id="IPR000857">
    <property type="entry name" value="MyTH4_dom"/>
</dbReference>
<dbReference type="InterPro" id="IPR038185">
    <property type="entry name" value="MyTH4_dom_sf"/>
</dbReference>
<dbReference type="InterPro" id="IPR008936">
    <property type="entry name" value="Rho_GTPase_activation_prot"/>
</dbReference>
<dbReference type="InterPro" id="IPR000198">
    <property type="entry name" value="RhoGAP_dom"/>
</dbReference>
<dbReference type="InterPro" id="IPR001202">
    <property type="entry name" value="WW_dom"/>
</dbReference>
<dbReference type="InterPro" id="IPR036020">
    <property type="entry name" value="WW_dom_sf"/>
</dbReference>
<dbReference type="PANTHER" id="PTHR45876">
    <property type="entry name" value="FI04035P"/>
    <property type="match status" value="1"/>
</dbReference>
<dbReference type="PANTHER" id="PTHR45876:SF1">
    <property type="entry name" value="RHO GTPASE-ACTIVATING PROTEIN 39"/>
    <property type="match status" value="1"/>
</dbReference>
<dbReference type="Pfam" id="PF00784">
    <property type="entry name" value="MyTH4"/>
    <property type="match status" value="1"/>
</dbReference>
<dbReference type="Pfam" id="PF00620">
    <property type="entry name" value="RhoGAP"/>
    <property type="match status" value="1"/>
</dbReference>
<dbReference type="SMART" id="SM00139">
    <property type="entry name" value="MyTH4"/>
    <property type="match status" value="1"/>
</dbReference>
<dbReference type="SMART" id="SM00324">
    <property type="entry name" value="RhoGAP"/>
    <property type="match status" value="1"/>
</dbReference>
<dbReference type="SMART" id="SM00456">
    <property type="entry name" value="WW"/>
    <property type="match status" value="2"/>
</dbReference>
<dbReference type="SUPFAM" id="SSF48350">
    <property type="entry name" value="GTPase activation domain, GAP"/>
    <property type="match status" value="1"/>
</dbReference>
<dbReference type="SUPFAM" id="SSF51045">
    <property type="entry name" value="WW domain"/>
    <property type="match status" value="1"/>
</dbReference>
<dbReference type="PROSITE" id="PS51016">
    <property type="entry name" value="MYTH4"/>
    <property type="match status" value="1"/>
</dbReference>
<dbReference type="PROSITE" id="PS50238">
    <property type="entry name" value="RHOGAP"/>
    <property type="match status" value="1"/>
</dbReference>
<dbReference type="PROSITE" id="PS50020">
    <property type="entry name" value="WW_DOMAIN_2"/>
    <property type="match status" value="1"/>
</dbReference>
<name>RHG39_HUMAN</name>
<reference key="1">
    <citation type="journal article" date="2000" name="DNA Res.">
        <title>Prediction of the coding sequences of unidentified human genes. XIX. The complete sequences of 100 new cDNA clones from brain which code for large proteins in vitro.</title>
        <authorList>
            <person name="Nagase T."/>
            <person name="Kikuno R."/>
            <person name="Hattori A."/>
            <person name="Kondo Y."/>
            <person name="Okumura K."/>
            <person name="Ohara O."/>
        </authorList>
    </citation>
    <scope>NUCLEOTIDE SEQUENCE [LARGE SCALE MRNA] (ISOFORM 1)</scope>
    <source>
        <tissue>Brain</tissue>
    </source>
</reference>
<reference key="2">
    <citation type="journal article" date="2006" name="Nature">
        <title>DNA sequence and analysis of human chromosome 8.</title>
        <authorList>
            <person name="Nusbaum C."/>
            <person name="Mikkelsen T.S."/>
            <person name="Zody M.C."/>
            <person name="Asakawa S."/>
            <person name="Taudien S."/>
            <person name="Garber M."/>
            <person name="Kodira C.D."/>
            <person name="Schueler M.G."/>
            <person name="Shimizu A."/>
            <person name="Whittaker C.A."/>
            <person name="Chang J.L."/>
            <person name="Cuomo C.A."/>
            <person name="Dewar K."/>
            <person name="FitzGerald M.G."/>
            <person name="Yang X."/>
            <person name="Allen N.R."/>
            <person name="Anderson S."/>
            <person name="Asakawa T."/>
            <person name="Blechschmidt K."/>
            <person name="Bloom T."/>
            <person name="Borowsky M.L."/>
            <person name="Butler J."/>
            <person name="Cook A."/>
            <person name="Corum B."/>
            <person name="DeArellano K."/>
            <person name="DeCaprio D."/>
            <person name="Dooley K.T."/>
            <person name="Dorris L. III"/>
            <person name="Engels R."/>
            <person name="Gloeckner G."/>
            <person name="Hafez N."/>
            <person name="Hagopian D.S."/>
            <person name="Hall J.L."/>
            <person name="Ishikawa S.K."/>
            <person name="Jaffe D.B."/>
            <person name="Kamat A."/>
            <person name="Kudoh J."/>
            <person name="Lehmann R."/>
            <person name="Lokitsang T."/>
            <person name="Macdonald P."/>
            <person name="Major J.E."/>
            <person name="Matthews C.D."/>
            <person name="Mauceli E."/>
            <person name="Menzel U."/>
            <person name="Mihalev A.H."/>
            <person name="Minoshima S."/>
            <person name="Murayama Y."/>
            <person name="Naylor J.W."/>
            <person name="Nicol R."/>
            <person name="Nguyen C."/>
            <person name="O'Leary S.B."/>
            <person name="O'Neill K."/>
            <person name="Parker S.C.J."/>
            <person name="Polley A."/>
            <person name="Raymond C.K."/>
            <person name="Reichwald K."/>
            <person name="Rodriguez J."/>
            <person name="Sasaki T."/>
            <person name="Schilhabel M."/>
            <person name="Siddiqui R."/>
            <person name="Smith C.L."/>
            <person name="Sneddon T.P."/>
            <person name="Talamas J.A."/>
            <person name="Tenzin P."/>
            <person name="Topham K."/>
            <person name="Venkataraman V."/>
            <person name="Wen G."/>
            <person name="Yamazaki S."/>
            <person name="Young S.K."/>
            <person name="Zeng Q."/>
            <person name="Zimmer A.R."/>
            <person name="Rosenthal A."/>
            <person name="Birren B.W."/>
            <person name="Platzer M."/>
            <person name="Shimizu N."/>
            <person name="Lander E.S."/>
        </authorList>
    </citation>
    <scope>NUCLEOTIDE SEQUENCE [LARGE SCALE GENOMIC DNA]</scope>
</reference>
<reference key="3">
    <citation type="journal article" date="2004" name="Nat. Genet.">
        <title>Complete sequencing and characterization of 21,243 full-length human cDNAs.</title>
        <authorList>
            <person name="Ota T."/>
            <person name="Suzuki Y."/>
            <person name="Nishikawa T."/>
            <person name="Otsuki T."/>
            <person name="Sugiyama T."/>
            <person name="Irie R."/>
            <person name="Wakamatsu A."/>
            <person name="Hayashi K."/>
            <person name="Sato H."/>
            <person name="Nagai K."/>
            <person name="Kimura K."/>
            <person name="Makita H."/>
            <person name="Sekine M."/>
            <person name="Obayashi M."/>
            <person name="Nishi T."/>
            <person name="Shibahara T."/>
            <person name="Tanaka T."/>
            <person name="Ishii S."/>
            <person name="Yamamoto J."/>
            <person name="Saito K."/>
            <person name="Kawai Y."/>
            <person name="Isono Y."/>
            <person name="Nakamura Y."/>
            <person name="Nagahari K."/>
            <person name="Murakami K."/>
            <person name="Yasuda T."/>
            <person name="Iwayanagi T."/>
            <person name="Wagatsuma M."/>
            <person name="Shiratori A."/>
            <person name="Sudo H."/>
            <person name="Hosoiri T."/>
            <person name="Kaku Y."/>
            <person name="Kodaira H."/>
            <person name="Kondo H."/>
            <person name="Sugawara M."/>
            <person name="Takahashi M."/>
            <person name="Kanda K."/>
            <person name="Yokoi T."/>
            <person name="Furuya T."/>
            <person name="Kikkawa E."/>
            <person name="Omura Y."/>
            <person name="Abe K."/>
            <person name="Kamihara K."/>
            <person name="Katsuta N."/>
            <person name="Sato K."/>
            <person name="Tanikawa M."/>
            <person name="Yamazaki M."/>
            <person name="Ninomiya K."/>
            <person name="Ishibashi T."/>
            <person name="Yamashita H."/>
            <person name="Murakawa K."/>
            <person name="Fujimori K."/>
            <person name="Tanai H."/>
            <person name="Kimata M."/>
            <person name="Watanabe M."/>
            <person name="Hiraoka S."/>
            <person name="Chiba Y."/>
            <person name="Ishida S."/>
            <person name="Ono Y."/>
            <person name="Takiguchi S."/>
            <person name="Watanabe S."/>
            <person name="Yosida M."/>
            <person name="Hotuta T."/>
            <person name="Kusano J."/>
            <person name="Kanehori K."/>
            <person name="Takahashi-Fujii A."/>
            <person name="Hara H."/>
            <person name="Tanase T.-O."/>
            <person name="Nomura Y."/>
            <person name="Togiya S."/>
            <person name="Komai F."/>
            <person name="Hara R."/>
            <person name="Takeuchi K."/>
            <person name="Arita M."/>
            <person name="Imose N."/>
            <person name="Musashino K."/>
            <person name="Yuuki H."/>
            <person name="Oshima A."/>
            <person name="Sasaki N."/>
            <person name="Aotsuka S."/>
            <person name="Yoshikawa Y."/>
            <person name="Matsunawa H."/>
            <person name="Ichihara T."/>
            <person name="Shiohata N."/>
            <person name="Sano S."/>
            <person name="Moriya S."/>
            <person name="Momiyama H."/>
            <person name="Satoh N."/>
            <person name="Takami S."/>
            <person name="Terashima Y."/>
            <person name="Suzuki O."/>
            <person name="Nakagawa S."/>
            <person name="Senoh A."/>
            <person name="Mizoguchi H."/>
            <person name="Goto Y."/>
            <person name="Shimizu F."/>
            <person name="Wakebe H."/>
            <person name="Hishigaki H."/>
            <person name="Watanabe T."/>
            <person name="Sugiyama A."/>
            <person name="Takemoto M."/>
            <person name="Kawakami B."/>
            <person name="Yamazaki M."/>
            <person name="Watanabe K."/>
            <person name="Kumagai A."/>
            <person name="Itakura S."/>
            <person name="Fukuzumi Y."/>
            <person name="Fujimori Y."/>
            <person name="Komiyama M."/>
            <person name="Tashiro H."/>
            <person name="Tanigami A."/>
            <person name="Fujiwara T."/>
            <person name="Ono T."/>
            <person name="Yamada K."/>
            <person name="Fujii Y."/>
            <person name="Ozaki K."/>
            <person name="Hirao M."/>
            <person name="Ohmori Y."/>
            <person name="Kawabata A."/>
            <person name="Hikiji T."/>
            <person name="Kobatake N."/>
            <person name="Inagaki H."/>
            <person name="Ikema Y."/>
            <person name="Okamoto S."/>
            <person name="Okitani R."/>
            <person name="Kawakami T."/>
            <person name="Noguchi S."/>
            <person name="Itoh T."/>
            <person name="Shigeta K."/>
            <person name="Senba T."/>
            <person name="Matsumura K."/>
            <person name="Nakajima Y."/>
            <person name="Mizuno T."/>
            <person name="Morinaga M."/>
            <person name="Sasaki M."/>
            <person name="Togashi T."/>
            <person name="Oyama M."/>
            <person name="Hata H."/>
            <person name="Watanabe M."/>
            <person name="Komatsu T."/>
            <person name="Mizushima-Sugano J."/>
            <person name="Satoh T."/>
            <person name="Shirai Y."/>
            <person name="Takahashi Y."/>
            <person name="Nakagawa K."/>
            <person name="Okumura K."/>
            <person name="Nagase T."/>
            <person name="Nomura N."/>
            <person name="Kikuchi H."/>
            <person name="Masuho Y."/>
            <person name="Yamashita R."/>
            <person name="Nakai K."/>
            <person name="Yada T."/>
            <person name="Nakamura Y."/>
            <person name="Ohara O."/>
            <person name="Isogai T."/>
            <person name="Sugano S."/>
        </authorList>
    </citation>
    <scope>NUCLEOTIDE SEQUENCE [LARGE SCALE MRNA] OF 407-1083 (ISOFORM 2)</scope>
    <source>
        <tissue>Trachea</tissue>
    </source>
</reference>
<reference key="4">
    <citation type="journal article" date="2008" name="Mol. Cell">
        <title>Kinase-selective enrichment enables quantitative phosphoproteomics of the kinome across the cell cycle.</title>
        <authorList>
            <person name="Daub H."/>
            <person name="Olsen J.V."/>
            <person name="Bairlein M."/>
            <person name="Gnad F."/>
            <person name="Oppermann F.S."/>
            <person name="Korner R."/>
            <person name="Greff Z."/>
            <person name="Keri G."/>
            <person name="Stemmann O."/>
            <person name="Mann M."/>
        </authorList>
    </citation>
    <scope>PHOSPHORYLATION [LARGE SCALE ANALYSIS] AT SER-604</scope>
    <scope>IDENTIFICATION BY MASS SPECTROMETRY [LARGE SCALE ANALYSIS]</scope>
    <source>
        <tissue>Cervix carcinoma</tissue>
    </source>
</reference>
<reference key="5">
    <citation type="journal article" date="2008" name="Proc. Natl. Acad. Sci. U.S.A.">
        <title>A quantitative atlas of mitotic phosphorylation.</title>
        <authorList>
            <person name="Dephoure N."/>
            <person name="Zhou C."/>
            <person name="Villen J."/>
            <person name="Beausoleil S.A."/>
            <person name="Bakalarski C.E."/>
            <person name="Elledge S.J."/>
            <person name="Gygi S.P."/>
        </authorList>
    </citation>
    <scope>PHOSPHORYLATION [LARGE SCALE ANALYSIS] AT SER-406 AND SER-407</scope>
    <scope>IDENTIFICATION BY MASS SPECTROMETRY [LARGE SCALE ANALYSIS]</scope>
    <source>
        <tissue>Cervix carcinoma</tissue>
    </source>
</reference>
<reference key="6">
    <citation type="journal article" date="2009" name="Anal. Chem.">
        <title>Lys-N and trypsin cover complementary parts of the phosphoproteome in a refined SCX-based approach.</title>
        <authorList>
            <person name="Gauci S."/>
            <person name="Helbig A.O."/>
            <person name="Slijper M."/>
            <person name="Krijgsveld J."/>
            <person name="Heck A.J."/>
            <person name="Mohammed S."/>
        </authorList>
    </citation>
    <scope>IDENTIFICATION BY MASS SPECTROMETRY [LARGE SCALE ANALYSIS]</scope>
</reference>
<reference key="7">
    <citation type="journal article" date="2009" name="Sci. Signal.">
        <title>Quantitative phosphoproteomic analysis of T cell receptor signaling reveals system-wide modulation of protein-protein interactions.</title>
        <authorList>
            <person name="Mayya V."/>
            <person name="Lundgren D.H."/>
            <person name="Hwang S.-I."/>
            <person name="Rezaul K."/>
            <person name="Wu L."/>
            <person name="Eng J.K."/>
            <person name="Rodionov V."/>
            <person name="Han D.K."/>
        </authorList>
    </citation>
    <scope>PHOSPHORYLATION [LARGE SCALE ANALYSIS] AT SER-604</scope>
    <scope>IDENTIFICATION BY MASS SPECTROMETRY [LARGE SCALE ANALYSIS]</scope>
    <source>
        <tissue>Leukemic T-cell</tissue>
    </source>
</reference>
<reference key="8">
    <citation type="journal article" date="2010" name="Sci. Signal.">
        <title>Quantitative phosphoproteomics reveals widespread full phosphorylation site occupancy during mitosis.</title>
        <authorList>
            <person name="Olsen J.V."/>
            <person name="Vermeulen M."/>
            <person name="Santamaria A."/>
            <person name="Kumar C."/>
            <person name="Miller M.L."/>
            <person name="Jensen L.J."/>
            <person name="Gnad F."/>
            <person name="Cox J."/>
            <person name="Jensen T.S."/>
            <person name="Nigg E.A."/>
            <person name="Brunak S."/>
            <person name="Mann M."/>
        </authorList>
    </citation>
    <scope>PHOSPHORYLATION [LARGE SCALE ANALYSIS] AT SER-388 AND SER-604</scope>
    <scope>IDENTIFICATION BY MASS SPECTROMETRY [LARGE SCALE ANALYSIS]</scope>
    <source>
        <tissue>Cervix carcinoma</tissue>
    </source>
</reference>
<reference key="9">
    <citation type="journal article" date="2012" name="Proc. Natl. Acad. Sci. U.S.A.">
        <title>N-terminal acetylome analyses and functional insights of the N-terminal acetyltransferase NatB.</title>
        <authorList>
            <person name="Van Damme P."/>
            <person name="Lasa M."/>
            <person name="Polevoda B."/>
            <person name="Gazquez C."/>
            <person name="Elosegui-Artola A."/>
            <person name="Kim D.S."/>
            <person name="De Juan-Pardo E."/>
            <person name="Demeyer K."/>
            <person name="Hole K."/>
            <person name="Larrea E."/>
            <person name="Timmerman E."/>
            <person name="Prieto J."/>
            <person name="Arnesen T."/>
            <person name="Sherman F."/>
            <person name="Gevaert K."/>
            <person name="Aldabe R."/>
        </authorList>
    </citation>
    <scope>ACETYLATION [LARGE SCALE ANALYSIS] AT SER-2</scope>
    <scope>CLEAVAGE OF INITIATOR METHIONINE [LARGE SCALE ANALYSIS]</scope>
    <scope>IDENTIFICATION BY MASS SPECTROMETRY [LARGE SCALE ANALYSIS]</scope>
</reference>
<reference key="10">
    <citation type="journal article" date="2013" name="J. Proteome Res.">
        <title>Toward a comprehensive characterization of a human cancer cell phosphoproteome.</title>
        <authorList>
            <person name="Zhou H."/>
            <person name="Di Palma S."/>
            <person name="Preisinger C."/>
            <person name="Peng M."/>
            <person name="Polat A.N."/>
            <person name="Heck A.J."/>
            <person name="Mohammed S."/>
        </authorList>
    </citation>
    <scope>PHOSPHORYLATION [LARGE SCALE ANALYSIS] AT SER-169; SER-286; SER-407; SER-604 AND SER-690</scope>
    <scope>IDENTIFICATION BY MASS SPECTROMETRY [LARGE SCALE ANALYSIS]</scope>
    <source>
        <tissue>Cervix carcinoma</tissue>
        <tissue>Erythroleukemia</tissue>
    </source>
</reference>
<sequence>MSQTQDYECRSHNVDLPESRIPGSNTRLEWVEIIEPRTRERMYANLVTGECVWDPPAGVRIKRTSENQWWELFDPNTSRFYYYNASTQRTVWHRPQGCDIIPLAKLQTLKQNTESPRASAESSPGRGSSVSREGSTSSSLEPEPDTEKAQELPARAGRPAAFGTVKEDSGSSSPPGVFLEKDYEIYRDYSADGQLLHYRTSSLRWNSGAKERMLIKVADREPSFLAAQGNGYAPDGPPGVRSRRPSGSQHSPSLQTFAPEADGTIFFPERRPSPFLKRAELPGSSSPLLAQPRKPSGDSQPSSPRYGYEPPLYEEPPVEYQAPIYDEPPMDVQFEAGGGYQAGSPQRSPGRKPRPFLQPNKQGPPSPCQQLVLTKQKCPERFLSLEYSPAGKEYVRQLVYVEQAGSSPKLRAGPRHKYAPNPGGGSYSLQPSPCLLRDQRLGVKSGDYSTMEGPELRHSQPPTPLPQAQEDAMSWSSQQDTLSSTGYSPGTRKRKSRKPSLCQATSATPTEGPGDLLVEQPLAEEQPPCGTSLAPVKRAEGEAEGARGAAEPFLAQARLAWEAQQAHFHMKQRSSWDSQQDGSGYESDGALPLPMPGPVVRAFSEDEALAQQENRHWRRGTFEKLGFPQILLEKSVSVQTNLASPEPYLHPSQSEDLAACAQFESSRQSRSGVPSSSCVFPTFTLRKPSSETDIENWASKHFNKHTQGLFRRKVSIANMLAWSSESIKKPMIVTSDRHVKKEACELFKLIQMYMGDRRAKADPLHVALEVATKGWSVQGLRDELYIQLCRQTTENFRLESLARGWELMAICLAFFPPTPKFHSYLEGYIYRHMDPVNDTKGVAISTYAKYCYHKLQKAALTGAKKGLKKPNVEEIRHAKNAVFSPSMFGSALQEVMGMQRERYPERQLPWVQTRLSEEVLALNGDQTEGIFRVPGDIDEVNALKLQVDQWKVPTGLEDPHVPASLLKLWYRELEEPLIPHEFYEQCIAHYDSPEAAVAVVHALPRINRMVLCYLIRFLQVFVQPANVAVTKMDVSNLAMVMAPNCLRCQSDDPRVIFENTRKEMSFLRVLIQHLDTSFMEGVL</sequence>
<keyword id="KW-0007">Acetylation</keyword>
<keyword id="KW-0025">Alternative splicing</keyword>
<keyword id="KW-0343">GTPase activation</keyword>
<keyword id="KW-0539">Nucleus</keyword>
<keyword id="KW-0597">Phosphoprotein</keyword>
<keyword id="KW-1267">Proteomics identification</keyword>
<keyword id="KW-1185">Reference proteome</keyword>
<keyword id="KW-0677">Repeat</keyword>
<accession>Q9C0H5</accession>
<accession>B4E1I1</accession>
<proteinExistence type="evidence at protein level"/>